<dbReference type="EMBL" id="L39832">
    <property type="protein sequence ID" value="AAA79755.1"/>
    <property type="molecule type" value="Genomic_DNA"/>
</dbReference>
<dbReference type="EMBL" id="AE004091">
    <property type="protein sequence ID" value="AAG04834.1"/>
    <property type="molecule type" value="Genomic_DNA"/>
</dbReference>
<dbReference type="PIR" id="G83464">
    <property type="entry name" value="G83464"/>
</dbReference>
<dbReference type="RefSeq" id="NP_250136.1">
    <property type="nucleotide sequence ID" value="NC_002516.2"/>
</dbReference>
<dbReference type="RefSeq" id="WP_003083051.1">
    <property type="nucleotide sequence ID" value="NZ_QZGE01000005.1"/>
</dbReference>
<dbReference type="FunCoup" id="Q51467">
    <property type="interactions" value="52"/>
</dbReference>
<dbReference type="STRING" id="208964.PA1445"/>
<dbReference type="PaxDb" id="208964-PA1445"/>
<dbReference type="DNASU" id="881854"/>
<dbReference type="GeneID" id="881854"/>
<dbReference type="KEGG" id="pae:PA1445"/>
<dbReference type="PATRIC" id="fig|208964.12.peg.1496"/>
<dbReference type="PseudoCAP" id="PA1445"/>
<dbReference type="HOGENOM" id="CLU_113213_2_0_6"/>
<dbReference type="InParanoid" id="Q51467"/>
<dbReference type="OrthoDB" id="5741235at2"/>
<dbReference type="PhylomeDB" id="Q51467"/>
<dbReference type="BioCyc" id="PAER208964:G1FZ6-1471-MONOMER"/>
<dbReference type="Proteomes" id="UP000002438">
    <property type="component" value="Chromosome"/>
</dbReference>
<dbReference type="GO" id="GO:0009425">
    <property type="term" value="C:bacterial-type flagellum basal body"/>
    <property type="evidence" value="ECO:0007669"/>
    <property type="project" value="UniProtKB-SubCell"/>
</dbReference>
<dbReference type="GO" id="GO:0005886">
    <property type="term" value="C:plasma membrane"/>
    <property type="evidence" value="ECO:0007669"/>
    <property type="project" value="UniProtKB-SubCell"/>
</dbReference>
<dbReference type="GO" id="GO:0097588">
    <property type="term" value="P:archaeal or bacterial-type flagellum-dependent cell motility"/>
    <property type="evidence" value="ECO:0007669"/>
    <property type="project" value="UniProtKB-KW"/>
</dbReference>
<dbReference type="GO" id="GO:0044781">
    <property type="term" value="P:bacterial-type flagellum organization"/>
    <property type="evidence" value="ECO:0007669"/>
    <property type="project" value="InterPro"/>
</dbReference>
<dbReference type="GO" id="GO:0006935">
    <property type="term" value="P:chemotaxis"/>
    <property type="evidence" value="ECO:0007669"/>
    <property type="project" value="UniProtKB-KW"/>
</dbReference>
<dbReference type="InterPro" id="IPR022781">
    <property type="entry name" value="Flagellar_biosynth_FliO"/>
</dbReference>
<dbReference type="InterPro" id="IPR052205">
    <property type="entry name" value="FliO/MopB"/>
</dbReference>
<dbReference type="NCBIfam" id="TIGR03500">
    <property type="entry name" value="FliO_TIGR"/>
    <property type="match status" value="1"/>
</dbReference>
<dbReference type="PANTHER" id="PTHR38766">
    <property type="entry name" value="FLAGELLAR PROTEIN FLIO"/>
    <property type="match status" value="1"/>
</dbReference>
<dbReference type="PANTHER" id="PTHR38766:SF1">
    <property type="entry name" value="FLAGELLAR PROTEIN FLIO"/>
    <property type="match status" value="1"/>
</dbReference>
<dbReference type="Pfam" id="PF04347">
    <property type="entry name" value="FliO"/>
    <property type="match status" value="1"/>
</dbReference>
<proteinExistence type="inferred from homology"/>
<evidence type="ECO:0000255" key="1"/>
<evidence type="ECO:0000305" key="2"/>
<keyword id="KW-0975">Bacterial flagellum</keyword>
<keyword id="KW-1003">Cell membrane</keyword>
<keyword id="KW-0145">Chemotaxis</keyword>
<keyword id="KW-0283">Flagellar rotation</keyword>
<keyword id="KW-0472">Membrane</keyword>
<keyword id="KW-1185">Reference proteome</keyword>
<keyword id="KW-0812">Transmembrane</keyword>
<keyword id="KW-1133">Transmembrane helix</keyword>
<sequence length="150" mass="15787">MRRYLFAGFLPALASLSAPLCAAEGTTGAAAPTVGAASGAAAQLAQLVLGLGLVIGLIFLLAWLVRRVQQAGPRGNRLIRTLASQPLGPRDRLVLVQVGEEQILLGLTPGRITPLHVLKEPVHLPDGEPATPEFAQRLLELLNKDPKGKP</sequence>
<organism>
    <name type="scientific">Pseudomonas aeruginosa (strain ATCC 15692 / DSM 22644 / CIP 104116 / JCM 14847 / LMG 12228 / 1C / PRS 101 / PAO1)</name>
    <dbReference type="NCBI Taxonomy" id="208964"/>
    <lineage>
        <taxon>Bacteria</taxon>
        <taxon>Pseudomonadati</taxon>
        <taxon>Pseudomonadota</taxon>
        <taxon>Gammaproteobacteria</taxon>
        <taxon>Pseudomonadales</taxon>
        <taxon>Pseudomonadaceae</taxon>
        <taxon>Pseudomonas</taxon>
    </lineage>
</organism>
<comment type="function">
    <text>Involved in flagellar biosynthesis and adherence. May have a role in assisting the proper localization of the various flagellar components and in the localization and assembly of the adhesin on the bacterial surface.</text>
</comment>
<comment type="subcellular location">
    <subcellularLocation>
        <location>Cell membrane</location>
        <topology>Multi-pass membrane protein</topology>
    </subcellularLocation>
    <subcellularLocation>
        <location>Bacterial flagellum basal body</location>
    </subcellularLocation>
</comment>
<comment type="similarity">
    <text evidence="2">Belongs to the FliO/MopB family.</text>
</comment>
<name>FLIO_PSEAE</name>
<feature type="chain" id="PRO_0000206846" description="Flagellar protein FliO">
    <location>
        <begin position="1"/>
        <end position="150"/>
    </location>
</feature>
<feature type="transmembrane region" description="Helical" evidence="1">
    <location>
        <begin position="5"/>
        <end position="25"/>
    </location>
</feature>
<feature type="transmembrane region" description="Helical" evidence="1">
    <location>
        <begin position="45"/>
        <end position="65"/>
    </location>
</feature>
<feature type="sequence conflict" description="In Ref. 1; AAA79755." evidence="2" ref="1">
    <original>PATPEFAQRLLELLNKDPKGKP</original>
    <variation>RPRRNSPSACWSC</variation>
    <location>
        <begin position="129"/>
        <end position="150"/>
    </location>
</feature>
<reference key="1">
    <citation type="journal article" date="1995" name="Infect. Immun.">
        <title>Characterization of Pseudomonas aeruginosa fliO, a gene involved in flagellar biosynthesis and adherence.</title>
        <authorList>
            <person name="Simpson D.A."/>
            <person name="Ramphal R."/>
            <person name="Lory S."/>
        </authorList>
    </citation>
    <scope>NUCLEOTIDE SEQUENCE [GENOMIC DNA]</scope>
    <source>
        <strain>PAK</strain>
    </source>
</reference>
<reference key="2">
    <citation type="journal article" date="2000" name="Nature">
        <title>Complete genome sequence of Pseudomonas aeruginosa PAO1, an opportunistic pathogen.</title>
        <authorList>
            <person name="Stover C.K."/>
            <person name="Pham X.-Q.T."/>
            <person name="Erwin A.L."/>
            <person name="Mizoguchi S.D."/>
            <person name="Warrener P."/>
            <person name="Hickey M.J."/>
            <person name="Brinkman F.S.L."/>
            <person name="Hufnagle W.O."/>
            <person name="Kowalik D.J."/>
            <person name="Lagrou M."/>
            <person name="Garber R.L."/>
            <person name="Goltry L."/>
            <person name="Tolentino E."/>
            <person name="Westbrock-Wadman S."/>
            <person name="Yuan Y."/>
            <person name="Brody L.L."/>
            <person name="Coulter S.N."/>
            <person name="Folger K.R."/>
            <person name="Kas A."/>
            <person name="Larbig K."/>
            <person name="Lim R.M."/>
            <person name="Smith K.A."/>
            <person name="Spencer D.H."/>
            <person name="Wong G.K.-S."/>
            <person name="Wu Z."/>
            <person name="Paulsen I.T."/>
            <person name="Reizer J."/>
            <person name="Saier M.H. Jr."/>
            <person name="Hancock R.E.W."/>
            <person name="Lory S."/>
            <person name="Olson M.V."/>
        </authorList>
    </citation>
    <scope>NUCLEOTIDE SEQUENCE [LARGE SCALE GENOMIC DNA]</scope>
    <source>
        <strain>ATCC 15692 / DSM 22644 / CIP 104116 / JCM 14847 / LMG 12228 / 1C / PRS 101 / PAO1</strain>
    </source>
</reference>
<gene>
    <name type="primary">fliO</name>
    <name type="ordered locus">PA1445</name>
</gene>
<accession>Q51467</accession>
<protein>
    <recommendedName>
        <fullName>Flagellar protein FliO</fullName>
    </recommendedName>
</protein>